<gene>
    <name evidence="6" type="primary">mycP4</name>
    <name evidence="8" type="ordered locus">Rv3449</name>
</gene>
<sequence length="455" mass="46016">MTTSRTLRLLVVSALATLSGLGTPVAHAVSPPPIDERWLPESALPAPPRPTVQREVCTEVTAESGRAFGRAERSAQLADLDQVWRLTRGAGQRVAVIDTGVARHRRLPKVVAGGDYVFTGDGTADCDAHGTLVAGIIAAAPDAQSDNFSGVAPDVTLISIRQSSSKFAPVGDPSSTGVGDVDTMAKAVRTAADLGASVINISSIACVPAAAAPDDRALGAALAYAVDVKNAVIVAAAGNTGGAAQCPPQAPGVTRDSVTVAVSPAWYDDYVLTVGSVNAQGEPSAFTLAGPWVDVAATGEAVTSLSPFGDGTVNRLGGQHGSIPISGTSYAAPVVSGLAALIRARFPTLTARQVMQRIESTAHHPPAGWDPLVGNGTVDALAAVSSDSIPQAGTATSDPAPVAVPVPRRSTPGPSDRRALHTAFAGAAICLLALMATLATASRRLRPGRNGIAGD</sequence>
<organism>
    <name type="scientific">Mycobacterium tuberculosis (strain ATCC 25618 / H37Rv)</name>
    <dbReference type="NCBI Taxonomy" id="83332"/>
    <lineage>
        <taxon>Bacteria</taxon>
        <taxon>Bacillati</taxon>
        <taxon>Actinomycetota</taxon>
        <taxon>Actinomycetes</taxon>
        <taxon>Mycobacteriales</taxon>
        <taxon>Mycobacteriaceae</taxon>
        <taxon>Mycobacterium</taxon>
        <taxon>Mycobacterium tuberculosis complex</taxon>
    </lineage>
</organism>
<keyword id="KW-1003">Cell membrane</keyword>
<keyword id="KW-0378">Hydrolase</keyword>
<keyword id="KW-0472">Membrane</keyword>
<keyword id="KW-0645">Protease</keyword>
<keyword id="KW-1185">Reference proteome</keyword>
<keyword id="KW-0720">Serine protease</keyword>
<keyword id="KW-0732">Signal</keyword>
<keyword id="KW-0812">Transmembrane</keyword>
<keyword id="KW-1133">Transmembrane helix</keyword>
<evidence type="ECO:0000250" key="1">
    <source>
        <dbReference type="UniProtKB" id="O05461"/>
    </source>
</evidence>
<evidence type="ECO:0000255" key="2"/>
<evidence type="ECO:0000255" key="3">
    <source>
        <dbReference type="PROSITE-ProRule" id="PRU01240"/>
    </source>
</evidence>
<evidence type="ECO:0000256" key="4">
    <source>
        <dbReference type="SAM" id="MobiDB-lite"/>
    </source>
</evidence>
<evidence type="ECO:0000269" key="5">
    <source>
    </source>
</evidence>
<evidence type="ECO:0000303" key="6">
    <source>
    </source>
</evidence>
<evidence type="ECO:0000305" key="7"/>
<evidence type="ECO:0000312" key="8">
    <source>
        <dbReference type="EMBL" id="CCP46271.1"/>
    </source>
</evidence>
<accession>I6YC58</accession>
<protein>
    <recommendedName>
        <fullName evidence="6">Mycosin-4</fullName>
        <ecNumber evidence="1">3.4.21.-</ecNumber>
    </recommendedName>
    <alternativeName>
        <fullName evidence="7">MycP4 protease</fullName>
    </alternativeName>
</protein>
<reference key="1">
    <citation type="journal article" date="1998" name="Nature">
        <title>Deciphering the biology of Mycobacterium tuberculosis from the complete genome sequence.</title>
        <authorList>
            <person name="Cole S.T."/>
            <person name="Brosch R."/>
            <person name="Parkhill J."/>
            <person name="Garnier T."/>
            <person name="Churcher C.M."/>
            <person name="Harris D.E."/>
            <person name="Gordon S.V."/>
            <person name="Eiglmeier K."/>
            <person name="Gas S."/>
            <person name="Barry C.E. III"/>
            <person name="Tekaia F."/>
            <person name="Badcock K."/>
            <person name="Basham D."/>
            <person name="Brown D."/>
            <person name="Chillingworth T."/>
            <person name="Connor R."/>
            <person name="Davies R.M."/>
            <person name="Devlin K."/>
            <person name="Feltwell T."/>
            <person name="Gentles S."/>
            <person name="Hamlin N."/>
            <person name="Holroyd S."/>
            <person name="Hornsby T."/>
            <person name="Jagels K."/>
            <person name="Krogh A."/>
            <person name="McLean J."/>
            <person name="Moule S."/>
            <person name="Murphy L.D."/>
            <person name="Oliver S."/>
            <person name="Osborne J."/>
            <person name="Quail M.A."/>
            <person name="Rajandream M.A."/>
            <person name="Rogers J."/>
            <person name="Rutter S."/>
            <person name="Seeger K."/>
            <person name="Skelton S."/>
            <person name="Squares S."/>
            <person name="Squares R."/>
            <person name="Sulston J.E."/>
            <person name="Taylor K."/>
            <person name="Whitehead S."/>
            <person name="Barrell B.G."/>
        </authorList>
    </citation>
    <scope>NUCLEOTIDE SEQUENCE [LARGE SCALE GENOMIC DNA]</scope>
    <source>
        <strain>ATCC 25618 / H37Rv</strain>
    </source>
</reference>
<reference key="2">
    <citation type="journal article" date="2000" name="Gene">
        <title>The mycosins of Mycobacterium tuberculosis H37Rv: a family of subtilisin-like serine proteases.</title>
        <authorList>
            <person name="Brown G.D."/>
            <person name="Dave J.A."/>
            <person name="Gey van Pittius N.C."/>
            <person name="Stevens L."/>
            <person name="Ehlers M.R."/>
            <person name="Beyers A.D."/>
        </authorList>
    </citation>
    <scope>INDUCTION</scope>
    <source>
        <strain>H37Rv</strain>
    </source>
</reference>
<name>MYCP4_MYCTU</name>
<dbReference type="EC" id="3.4.21.-" evidence="1"/>
<dbReference type="EMBL" id="AL123456">
    <property type="protein sequence ID" value="CCP46271.1"/>
    <property type="molecule type" value="Genomic_DNA"/>
</dbReference>
<dbReference type="RefSeq" id="NP_217966.1">
    <property type="nucleotide sequence ID" value="NC_000962.3"/>
</dbReference>
<dbReference type="RefSeq" id="WP_003418331.1">
    <property type="nucleotide sequence ID" value="NZ_NVQJ01000065.1"/>
</dbReference>
<dbReference type="SMR" id="I6YC58"/>
<dbReference type="FunCoup" id="I6YC58">
    <property type="interactions" value="34"/>
</dbReference>
<dbReference type="STRING" id="83332.Rv3449"/>
<dbReference type="MEROPS" id="S08.131"/>
<dbReference type="PaxDb" id="83332-Rv3449"/>
<dbReference type="DNASU" id="887602"/>
<dbReference type="GeneID" id="887602"/>
<dbReference type="KEGG" id="mtu:Rv3449"/>
<dbReference type="KEGG" id="mtv:RVBD_3449"/>
<dbReference type="PATRIC" id="fig|83332.111.peg.3844"/>
<dbReference type="TubercuList" id="Rv3449"/>
<dbReference type="eggNOG" id="COG1404">
    <property type="taxonomic scope" value="Bacteria"/>
</dbReference>
<dbReference type="HOGENOM" id="CLU_011263_13_1_11"/>
<dbReference type="InParanoid" id="I6YC58"/>
<dbReference type="OrthoDB" id="9798386at2"/>
<dbReference type="PhylomeDB" id="I6YC58"/>
<dbReference type="Proteomes" id="UP000001584">
    <property type="component" value="Chromosome"/>
</dbReference>
<dbReference type="GO" id="GO:0005886">
    <property type="term" value="C:plasma membrane"/>
    <property type="evidence" value="ECO:0000318"/>
    <property type="project" value="GO_Central"/>
</dbReference>
<dbReference type="GO" id="GO:0004252">
    <property type="term" value="F:serine-type endopeptidase activity"/>
    <property type="evidence" value="ECO:0000318"/>
    <property type="project" value="GO_Central"/>
</dbReference>
<dbReference type="GO" id="GO:0016485">
    <property type="term" value="P:protein processing"/>
    <property type="evidence" value="ECO:0000318"/>
    <property type="project" value="GO_Central"/>
</dbReference>
<dbReference type="FunFam" id="3.40.50.200:FF:000018">
    <property type="entry name" value="Type VII secretion-associated serine protease mycosin"/>
    <property type="match status" value="1"/>
</dbReference>
<dbReference type="Gene3D" id="3.40.50.200">
    <property type="entry name" value="Peptidase S8/S53 domain"/>
    <property type="match status" value="1"/>
</dbReference>
<dbReference type="InterPro" id="IPR000209">
    <property type="entry name" value="Peptidase_S8/S53_dom"/>
</dbReference>
<dbReference type="InterPro" id="IPR036852">
    <property type="entry name" value="Peptidase_S8/S53_dom_sf"/>
</dbReference>
<dbReference type="InterPro" id="IPR023827">
    <property type="entry name" value="Peptidase_S8_Asp-AS"/>
</dbReference>
<dbReference type="InterPro" id="IPR022398">
    <property type="entry name" value="Peptidase_S8_His-AS"/>
</dbReference>
<dbReference type="InterPro" id="IPR023828">
    <property type="entry name" value="Peptidase_S8_Ser-AS"/>
</dbReference>
<dbReference type="InterPro" id="IPR015500">
    <property type="entry name" value="Peptidase_S8_subtilisin-rel"/>
</dbReference>
<dbReference type="InterPro" id="IPR023834">
    <property type="entry name" value="T7SS_pept_S8A_mycosin"/>
</dbReference>
<dbReference type="NCBIfam" id="TIGR03921">
    <property type="entry name" value="T7SS_mycosin"/>
    <property type="match status" value="1"/>
</dbReference>
<dbReference type="PANTHER" id="PTHR42884:SF14">
    <property type="entry name" value="NEUROENDOCRINE CONVERTASE 1"/>
    <property type="match status" value="1"/>
</dbReference>
<dbReference type="PANTHER" id="PTHR42884">
    <property type="entry name" value="PROPROTEIN CONVERTASE SUBTILISIN/KEXIN-RELATED"/>
    <property type="match status" value="1"/>
</dbReference>
<dbReference type="Pfam" id="PF00082">
    <property type="entry name" value="Peptidase_S8"/>
    <property type="match status" value="1"/>
</dbReference>
<dbReference type="PRINTS" id="PR00723">
    <property type="entry name" value="SUBTILISIN"/>
</dbReference>
<dbReference type="SUPFAM" id="SSF52743">
    <property type="entry name" value="Subtilisin-like"/>
    <property type="match status" value="1"/>
</dbReference>
<dbReference type="PROSITE" id="PS51892">
    <property type="entry name" value="SUBTILASE"/>
    <property type="match status" value="1"/>
</dbReference>
<dbReference type="PROSITE" id="PS00136">
    <property type="entry name" value="SUBTILASE_ASP"/>
    <property type="match status" value="1"/>
</dbReference>
<dbReference type="PROSITE" id="PS00137">
    <property type="entry name" value="SUBTILASE_HIS"/>
    <property type="match status" value="1"/>
</dbReference>
<dbReference type="PROSITE" id="PS00138">
    <property type="entry name" value="SUBTILASE_SER"/>
    <property type="match status" value="1"/>
</dbReference>
<proteinExistence type="evidence at transcript level"/>
<feature type="signal peptide" evidence="2">
    <location>
        <begin position="1"/>
        <end position="25"/>
    </location>
</feature>
<feature type="chain" id="PRO_5007674266" description="Mycosin-4">
    <location>
        <begin position="26"/>
        <end position="455"/>
    </location>
</feature>
<feature type="transmembrane region" description="Helical" evidence="2">
    <location>
        <begin position="432"/>
        <end position="452"/>
    </location>
</feature>
<feature type="domain" description="Peptidase S8" evidence="3">
    <location>
        <begin position="74"/>
        <end position="384"/>
    </location>
</feature>
<feature type="region of interest" description="Disordered" evidence="4">
    <location>
        <begin position="389"/>
        <end position="417"/>
    </location>
</feature>
<feature type="compositionally biased region" description="Low complexity" evidence="4">
    <location>
        <begin position="394"/>
        <end position="412"/>
    </location>
</feature>
<feature type="active site" description="Charge relay system" evidence="3">
    <location>
        <position position="98"/>
    </location>
</feature>
<feature type="active site" description="Charge relay system" evidence="3">
    <location>
        <position position="129"/>
    </location>
</feature>
<feature type="active site" description="Charge relay system" evidence="3">
    <location>
        <position position="329"/>
    </location>
</feature>
<comment type="subcellular location">
    <subcellularLocation>
        <location evidence="7">Cell membrane</location>
        <topology evidence="2">Single-pass membrane protein</topology>
    </subcellularLocation>
</comment>
<comment type="induction">
    <text evidence="5">Constitutively expressed during growth in culture.</text>
</comment>
<comment type="similarity">
    <text evidence="7">Belongs to the peptidase S8 family.</text>
</comment>